<comment type="catalytic activity">
    <reaction evidence="1">
        <text>beta-D-fructose 1,6-bisphosphate + H2O = beta-D-fructose 6-phosphate + phosphate</text>
        <dbReference type="Rhea" id="RHEA:11064"/>
        <dbReference type="ChEBI" id="CHEBI:15377"/>
        <dbReference type="ChEBI" id="CHEBI:32966"/>
        <dbReference type="ChEBI" id="CHEBI:43474"/>
        <dbReference type="ChEBI" id="CHEBI:57634"/>
        <dbReference type="EC" id="3.1.3.11"/>
    </reaction>
</comment>
<comment type="cofactor">
    <cofactor evidence="1">
        <name>Mn(2+)</name>
        <dbReference type="ChEBI" id="CHEBI:29035"/>
    </cofactor>
</comment>
<comment type="pathway">
    <text evidence="1">Carbohydrate biosynthesis; gluconeogenesis.</text>
</comment>
<comment type="similarity">
    <text evidence="1">Belongs to the FBPase class 3 family.</text>
</comment>
<sequence length="666" mass="76558">MNAYNSITPETIQEDMRYLQLLSHSFPTIADASTEIINLEAILNLPKGTEHFLADLHGEYEAFQHVLRNASGAIKRKVNEIFGNTLRENEKKELCTLIYYPEQKLDLVKAVETDLDDWYVITLNQLVRVCQNVSSKYTRSKVRKSLPKEFSYIIQELLHENSMVPNKQAYINVIISTIISTRRADDFIIALCNLIQRLTIDTLHVLGDIFDRGPAPHRIMDILCDYHNFDVQWGNHDILWMGAAAGNDCCMANVLRLAMRYGNLAALEDGYGINLLPLATFAMETYADDPCTLFGPKVEKEDCTYNAKTLRMIGQMHKAISVIQFKLEAEIIRRRPDFEMDDRMLLHRIDFERKTITMPNGKEYELKDSFLPTVNPADPYKLTDEEREIMNKLHRSFVSSEKLKKHIRCLFRYGCMYTVSNSNLLFHASIPLNADGTLKDVSIAGKMYKGKALLEKVGHLIRTAFFAEEDNEDRPFAVDYVWYLWCGKDSPAFDKDKMATFERYFLKEKELHKEVKGHYYSLRNEEKVCDMLLDEFGVIGTHRHIINGHVPVKTIQGENPIKANGKMMVIDGGFSKAYHSETGIAGYTLVYHSRGFQLVQHEPFTSMQKAIEEGQDIKSSTQIVEMSTQRMMVKDTDKGRELVTQINDLKKLLMAYRTGLIKEKSI</sequence>
<dbReference type="EC" id="3.1.3.11" evidence="1"/>
<dbReference type="EMBL" id="CP000139">
    <property type="protein sequence ID" value="ABR40540.1"/>
    <property type="molecule type" value="Genomic_DNA"/>
</dbReference>
<dbReference type="RefSeq" id="WP_005844705.1">
    <property type="nucleotide sequence ID" value="NZ_JANSWM010000024.1"/>
</dbReference>
<dbReference type="STRING" id="435590.BVU_2901"/>
<dbReference type="PaxDb" id="435590-BVU_2901"/>
<dbReference type="GeneID" id="5303862"/>
<dbReference type="KEGG" id="bvu:BVU_2901"/>
<dbReference type="eggNOG" id="COG3855">
    <property type="taxonomic scope" value="Bacteria"/>
</dbReference>
<dbReference type="HOGENOM" id="CLU_028392_2_0_10"/>
<dbReference type="BioCyc" id="BVUL435590:G1G59-3021-MONOMER"/>
<dbReference type="UniPathway" id="UPA00138"/>
<dbReference type="Proteomes" id="UP000002861">
    <property type="component" value="Chromosome"/>
</dbReference>
<dbReference type="GO" id="GO:0042132">
    <property type="term" value="F:fructose 1,6-bisphosphate 1-phosphatase activity"/>
    <property type="evidence" value="ECO:0007669"/>
    <property type="project" value="UniProtKB-UniRule"/>
</dbReference>
<dbReference type="GO" id="GO:0006094">
    <property type="term" value="P:gluconeogenesis"/>
    <property type="evidence" value="ECO:0007669"/>
    <property type="project" value="UniProtKB-UniRule"/>
</dbReference>
<dbReference type="Gene3D" id="3.60.21.10">
    <property type="match status" value="1"/>
</dbReference>
<dbReference type="HAMAP" id="MF_01854">
    <property type="entry name" value="FBPase_class3"/>
    <property type="match status" value="1"/>
</dbReference>
<dbReference type="InterPro" id="IPR009164">
    <property type="entry name" value="FBPtase_class3"/>
</dbReference>
<dbReference type="InterPro" id="IPR029052">
    <property type="entry name" value="Metallo-depent_PP-like"/>
</dbReference>
<dbReference type="Pfam" id="PF06874">
    <property type="entry name" value="FBPase_2"/>
    <property type="match status" value="1"/>
</dbReference>
<dbReference type="PIRSF" id="PIRSF000906">
    <property type="entry name" value="FBPtase_Bacill"/>
    <property type="match status" value="1"/>
</dbReference>
<dbReference type="SUPFAM" id="SSF56300">
    <property type="entry name" value="Metallo-dependent phosphatases"/>
    <property type="match status" value="2"/>
</dbReference>
<organism>
    <name type="scientific">Phocaeicola vulgatus (strain ATCC 8482 / DSM 1447 / JCM 5826 / CCUG 4940 / NBRC 14291 / NCTC 11154)</name>
    <name type="common">Bacteroides vulgatus</name>
    <dbReference type="NCBI Taxonomy" id="435590"/>
    <lineage>
        <taxon>Bacteria</taxon>
        <taxon>Pseudomonadati</taxon>
        <taxon>Bacteroidota</taxon>
        <taxon>Bacteroidia</taxon>
        <taxon>Bacteroidales</taxon>
        <taxon>Bacteroidaceae</taxon>
        <taxon>Phocaeicola</taxon>
    </lineage>
</organism>
<keyword id="KW-0119">Carbohydrate metabolism</keyword>
<keyword id="KW-0378">Hydrolase</keyword>
<keyword id="KW-0464">Manganese</keyword>
<feature type="chain" id="PRO_0000363076" description="Fructose-1,6-bisphosphatase class 3">
    <location>
        <begin position="1"/>
        <end position="666"/>
    </location>
</feature>
<evidence type="ECO:0000255" key="1">
    <source>
        <dbReference type="HAMAP-Rule" id="MF_01854"/>
    </source>
</evidence>
<protein>
    <recommendedName>
        <fullName evidence="1">Fructose-1,6-bisphosphatase class 3</fullName>
        <shortName evidence="1">FBPase class 3</shortName>
        <ecNumber evidence="1">3.1.3.11</ecNumber>
    </recommendedName>
    <alternativeName>
        <fullName evidence="1">D-fructose-1,6-bisphosphate 1-phosphohydrolase class 3</fullName>
    </alternativeName>
</protein>
<accession>A6L4C6</accession>
<name>F16PC_PHOV8</name>
<reference key="1">
    <citation type="journal article" date="2007" name="PLoS Biol.">
        <title>Evolution of symbiotic bacteria in the distal human intestine.</title>
        <authorList>
            <person name="Xu J."/>
            <person name="Mahowald M.A."/>
            <person name="Ley R.E."/>
            <person name="Lozupone C.A."/>
            <person name="Hamady M."/>
            <person name="Martens E.C."/>
            <person name="Henrissat B."/>
            <person name="Coutinho P.M."/>
            <person name="Minx P."/>
            <person name="Latreille P."/>
            <person name="Cordum H."/>
            <person name="Van Brunt A."/>
            <person name="Kim K."/>
            <person name="Fulton R.S."/>
            <person name="Fulton L.A."/>
            <person name="Clifton S.W."/>
            <person name="Wilson R.K."/>
            <person name="Knight R.D."/>
            <person name="Gordon J.I."/>
        </authorList>
    </citation>
    <scope>NUCLEOTIDE SEQUENCE [LARGE SCALE GENOMIC DNA]</scope>
    <source>
        <strain>ATCC 8482 / DSM 1447 / JCM 5826 / CCUG 4940 / NBRC 14291 / NCTC 11154</strain>
    </source>
</reference>
<proteinExistence type="inferred from homology"/>
<gene>
    <name evidence="1" type="primary">fbp</name>
    <name type="ordered locus">BVU_2901</name>
</gene>